<feature type="chain" id="PRO_0000303654" description="Probable bifunctional tRNA threonylcarbamoyladenosine biosynthesis protein">
    <location>
        <begin position="1"/>
        <end position="547"/>
    </location>
</feature>
<feature type="domain" description="Protein kinase" evidence="1">
    <location>
        <begin position="340"/>
        <end position="547"/>
    </location>
</feature>
<feature type="region of interest" description="Kae1">
    <location>
        <begin position="1"/>
        <end position="329"/>
    </location>
</feature>
<feature type="active site" description="Proton acceptor; for kinase activity" evidence="1">
    <location>
        <position position="464"/>
    </location>
</feature>
<feature type="binding site" evidence="1">
    <location>
        <position position="113"/>
    </location>
    <ligand>
        <name>Fe cation</name>
        <dbReference type="ChEBI" id="CHEBI:24875"/>
    </ligand>
</feature>
<feature type="binding site" evidence="1">
    <location>
        <position position="117"/>
    </location>
    <ligand>
        <name>Fe cation</name>
        <dbReference type="ChEBI" id="CHEBI:24875"/>
    </ligand>
</feature>
<feature type="binding site" evidence="1">
    <location>
        <begin position="134"/>
        <end position="138"/>
    </location>
    <ligand>
        <name>L-threonylcarbamoyladenylate</name>
        <dbReference type="ChEBI" id="CHEBI:73682"/>
    </ligand>
</feature>
<feature type="binding site" evidence="1">
    <location>
        <position position="134"/>
    </location>
    <ligand>
        <name>Fe cation</name>
        <dbReference type="ChEBI" id="CHEBI:24875"/>
    </ligand>
</feature>
<feature type="binding site" evidence="1">
    <location>
        <position position="166"/>
    </location>
    <ligand>
        <name>L-threonylcarbamoyladenylate</name>
        <dbReference type="ChEBI" id="CHEBI:73682"/>
    </ligand>
</feature>
<feature type="binding site" evidence="1">
    <location>
        <position position="179"/>
    </location>
    <ligand>
        <name>L-threonylcarbamoyladenylate</name>
        <dbReference type="ChEBI" id="CHEBI:73682"/>
    </ligand>
</feature>
<feature type="binding site" evidence="1">
    <location>
        <position position="183"/>
    </location>
    <ligand>
        <name>L-threonylcarbamoyladenylate</name>
        <dbReference type="ChEBI" id="CHEBI:73682"/>
    </ligand>
</feature>
<feature type="binding site" evidence="1">
    <location>
        <position position="262"/>
    </location>
    <ligand>
        <name>L-threonylcarbamoyladenylate</name>
        <dbReference type="ChEBI" id="CHEBI:73682"/>
    </ligand>
</feature>
<feature type="binding site" evidence="1">
    <location>
        <position position="290"/>
    </location>
    <ligand>
        <name>Fe cation</name>
        <dbReference type="ChEBI" id="CHEBI:24875"/>
    </ligand>
</feature>
<feature type="binding site" evidence="1">
    <location>
        <begin position="355"/>
        <end position="363"/>
    </location>
    <ligand>
        <name>ATP</name>
        <dbReference type="ChEBI" id="CHEBI:30616"/>
    </ligand>
</feature>
<feature type="binding site" evidence="1">
    <location>
        <position position="377"/>
    </location>
    <ligand>
        <name>ATP</name>
        <dbReference type="ChEBI" id="CHEBI:30616"/>
    </ligand>
</feature>
<name>KAE1B_METAC</name>
<reference key="1">
    <citation type="journal article" date="2002" name="Genome Res.">
        <title>The genome of Methanosarcina acetivorans reveals extensive metabolic and physiological diversity.</title>
        <authorList>
            <person name="Galagan J.E."/>
            <person name="Nusbaum C."/>
            <person name="Roy A."/>
            <person name="Endrizzi M.G."/>
            <person name="Macdonald P."/>
            <person name="FitzHugh W."/>
            <person name="Calvo S."/>
            <person name="Engels R."/>
            <person name="Smirnov S."/>
            <person name="Atnoor D."/>
            <person name="Brown A."/>
            <person name="Allen N."/>
            <person name="Naylor J."/>
            <person name="Stange-Thomann N."/>
            <person name="DeArellano K."/>
            <person name="Johnson R."/>
            <person name="Linton L."/>
            <person name="McEwan P."/>
            <person name="McKernan K."/>
            <person name="Talamas J."/>
            <person name="Tirrell A."/>
            <person name="Ye W."/>
            <person name="Zimmer A."/>
            <person name="Barber R.D."/>
            <person name="Cann I."/>
            <person name="Graham D.E."/>
            <person name="Grahame D.A."/>
            <person name="Guss A.M."/>
            <person name="Hedderich R."/>
            <person name="Ingram-Smith C."/>
            <person name="Kuettner H.C."/>
            <person name="Krzycki J.A."/>
            <person name="Leigh J.A."/>
            <person name="Li W."/>
            <person name="Liu J."/>
            <person name="Mukhopadhyay B."/>
            <person name="Reeve J.N."/>
            <person name="Smith K."/>
            <person name="Springer T.A."/>
            <person name="Umayam L.A."/>
            <person name="White O."/>
            <person name="White R.H."/>
            <person name="de Macario E.C."/>
            <person name="Ferry J.G."/>
            <person name="Jarrell K.F."/>
            <person name="Jing H."/>
            <person name="Macario A.J.L."/>
            <person name="Paulsen I.T."/>
            <person name="Pritchett M."/>
            <person name="Sowers K.R."/>
            <person name="Swanson R.V."/>
            <person name="Zinder S.H."/>
            <person name="Lander E."/>
            <person name="Metcalf W.W."/>
            <person name="Birren B."/>
        </authorList>
    </citation>
    <scope>NUCLEOTIDE SEQUENCE [LARGE SCALE GENOMIC DNA]</scope>
    <source>
        <strain>ATCC 35395 / DSM 2834 / JCM 12185 / C2A</strain>
    </source>
</reference>
<organism>
    <name type="scientific">Methanosarcina acetivorans (strain ATCC 35395 / DSM 2834 / JCM 12185 / C2A)</name>
    <dbReference type="NCBI Taxonomy" id="188937"/>
    <lineage>
        <taxon>Archaea</taxon>
        <taxon>Methanobacteriati</taxon>
        <taxon>Methanobacteriota</taxon>
        <taxon>Stenosarchaea group</taxon>
        <taxon>Methanomicrobia</taxon>
        <taxon>Methanosarcinales</taxon>
        <taxon>Methanosarcinaceae</taxon>
        <taxon>Methanosarcina</taxon>
    </lineage>
</organism>
<keyword id="KW-0012">Acyltransferase</keyword>
<keyword id="KW-0067">ATP-binding</keyword>
<keyword id="KW-0963">Cytoplasm</keyword>
<keyword id="KW-0408">Iron</keyword>
<keyword id="KW-0418">Kinase</keyword>
<keyword id="KW-0479">Metal-binding</keyword>
<keyword id="KW-0511">Multifunctional enzyme</keyword>
<keyword id="KW-0547">Nucleotide-binding</keyword>
<keyword id="KW-1185">Reference proteome</keyword>
<keyword id="KW-0723">Serine/threonine-protein kinase</keyword>
<keyword id="KW-0808">Transferase</keyword>
<keyword id="KW-0819">tRNA processing</keyword>
<sequence length="547" mass="60639">MKNTFILGIEGTAWNLSAAIVTETEIIAEVTETYKPEVGGIHPREAAQHHAKYAASVIKRLLAEAKEKGVEPSDLDGIAFSQGPGLGPCLRTIATAARMLSLSLDIPLIGVNHCIAHIEIGIWRTPARDPVVLYVSGANSQVISFMEGRYRVFGETLDIGLGNALDKFARRAGLPHPGGPKIEACAKDAKRYIPLPYVIKGMDLSFSGLSTASSEALKKASLEDVCYSYQETAFAMVVEVAERALAHTGKNEVLLAGGVGANTRLREMLNEMCEARGAKFYVPEKRFMGDNGTMIAYTGLLMYKSGNTLTLEDSRVNPNFRTDDVNVTWIKEEEMKKVPEISPEAFLRAPPGERLDNGAEAVIYLDEGPEGKKVLVKERVPKLYRHKEIDERIRRERNRTEARLISEARRAGVPTPIIYDIEEFKLKMQFIEGVPIKYLITPELSEKVGELVGRLHSSGIVHGDLTTSNLLLAGERLYLIDFGLAYFDKSLEARGVDVHVLFQTFESTHRGHETLVKAFEKGYGSTFIDSKDVLKRVEEIKKRARYA</sequence>
<protein>
    <recommendedName>
        <fullName evidence="1">Probable bifunctional tRNA threonylcarbamoyladenosine biosynthesis protein</fullName>
    </recommendedName>
    <domain>
        <recommendedName>
            <fullName evidence="1">tRNA N6-adenosine threonylcarbamoyltransferase</fullName>
            <ecNumber evidence="1">2.3.1.234</ecNumber>
        </recommendedName>
        <alternativeName>
            <fullName>N6-L-threonylcarbamoyladenine synthase</fullName>
            <shortName>t(6)A synthase</shortName>
        </alternativeName>
        <alternativeName>
            <fullName evidence="1">t(6)A37 threonylcarbamoyladenosine biosynthesis protein Kae1</fullName>
        </alternativeName>
        <alternativeName>
            <fullName evidence="1">tRNA threonylcarbamoyladenosine biosynthesis protein Kae1</fullName>
        </alternativeName>
    </domain>
    <domain>
        <recommendedName>
            <fullName evidence="1">Serine/threonine-protein kinase Bud32</fullName>
            <ecNumber evidence="1">2.7.11.1</ecNumber>
        </recommendedName>
    </domain>
</protein>
<comment type="function">
    <text evidence="1">Required for the formation of a threonylcarbamoyl group on adenosine at position 37 (t(6)A37) in tRNAs that read codons beginning with adenine. Is a component of the KEOPS complex that is probably involved in the transfer of the threonylcarbamoyl moiety of threonylcarbamoyl-AMP (TC-AMP) to the N6 group of A37. The Kae1 domain likely plays a direct catalytic role in this reaction. The Bud32 domain probably displays kinase activity that regulates Kae1 function.</text>
</comment>
<comment type="catalytic activity">
    <reaction evidence="1">
        <text>L-seryl-[protein] + ATP = O-phospho-L-seryl-[protein] + ADP + H(+)</text>
        <dbReference type="Rhea" id="RHEA:17989"/>
        <dbReference type="Rhea" id="RHEA-COMP:9863"/>
        <dbReference type="Rhea" id="RHEA-COMP:11604"/>
        <dbReference type="ChEBI" id="CHEBI:15378"/>
        <dbReference type="ChEBI" id="CHEBI:29999"/>
        <dbReference type="ChEBI" id="CHEBI:30616"/>
        <dbReference type="ChEBI" id="CHEBI:83421"/>
        <dbReference type="ChEBI" id="CHEBI:456216"/>
        <dbReference type="EC" id="2.7.11.1"/>
    </reaction>
</comment>
<comment type="catalytic activity">
    <reaction evidence="1">
        <text>L-threonyl-[protein] + ATP = O-phospho-L-threonyl-[protein] + ADP + H(+)</text>
        <dbReference type="Rhea" id="RHEA:46608"/>
        <dbReference type="Rhea" id="RHEA-COMP:11060"/>
        <dbReference type="Rhea" id="RHEA-COMP:11605"/>
        <dbReference type="ChEBI" id="CHEBI:15378"/>
        <dbReference type="ChEBI" id="CHEBI:30013"/>
        <dbReference type="ChEBI" id="CHEBI:30616"/>
        <dbReference type="ChEBI" id="CHEBI:61977"/>
        <dbReference type="ChEBI" id="CHEBI:456216"/>
        <dbReference type="EC" id="2.7.11.1"/>
    </reaction>
</comment>
<comment type="catalytic activity">
    <reaction evidence="1">
        <text>L-threonylcarbamoyladenylate + adenosine(37) in tRNA = N(6)-L-threonylcarbamoyladenosine(37) in tRNA + AMP + H(+)</text>
        <dbReference type="Rhea" id="RHEA:37059"/>
        <dbReference type="Rhea" id="RHEA-COMP:10162"/>
        <dbReference type="Rhea" id="RHEA-COMP:10163"/>
        <dbReference type="ChEBI" id="CHEBI:15378"/>
        <dbReference type="ChEBI" id="CHEBI:73682"/>
        <dbReference type="ChEBI" id="CHEBI:74411"/>
        <dbReference type="ChEBI" id="CHEBI:74418"/>
        <dbReference type="ChEBI" id="CHEBI:456215"/>
        <dbReference type="EC" id="2.3.1.234"/>
    </reaction>
</comment>
<comment type="cofactor">
    <cofactor evidence="1">
        <name>Fe(2+)</name>
        <dbReference type="ChEBI" id="CHEBI:29033"/>
    </cofactor>
    <text evidence="1">Binds 1 Fe(2+) ion per subunit.</text>
</comment>
<comment type="subunit">
    <text evidence="1">Component of the KEOPS complex that consists of Kae1, Bud32, Cgi121 and Pcc1; the whole complex dimerizes.</text>
</comment>
<comment type="subcellular location">
    <subcellularLocation>
        <location evidence="1">Cytoplasm</location>
    </subcellularLocation>
</comment>
<comment type="similarity">
    <text evidence="1">In the N-terminal section; belongs to the KAE1 / TsaD family.</text>
</comment>
<comment type="similarity">
    <text evidence="1">In the C-terminal section; belongs to the protein kinase superfamily. Tyr protein kinase family. BUD32 subfamily.</text>
</comment>
<gene>
    <name type="ordered locus">MA_3705</name>
</gene>
<proteinExistence type="inferred from homology"/>
<accession>Q8TJS2</accession>
<evidence type="ECO:0000255" key="1">
    <source>
        <dbReference type="HAMAP-Rule" id="MF_01447"/>
    </source>
</evidence>
<dbReference type="EC" id="2.3.1.234" evidence="1"/>
<dbReference type="EC" id="2.7.11.1" evidence="1"/>
<dbReference type="EMBL" id="AE010299">
    <property type="protein sequence ID" value="AAM07060.1"/>
    <property type="molecule type" value="Genomic_DNA"/>
</dbReference>
<dbReference type="RefSeq" id="WP_011023612.1">
    <property type="nucleotide sequence ID" value="NC_003552.1"/>
</dbReference>
<dbReference type="SMR" id="Q8TJS2"/>
<dbReference type="FunCoup" id="Q8TJS2">
    <property type="interactions" value="155"/>
</dbReference>
<dbReference type="STRING" id="188937.MA_3705"/>
<dbReference type="EnsemblBacteria" id="AAM07060">
    <property type="protein sequence ID" value="AAM07060"/>
    <property type="gene ID" value="MA_3705"/>
</dbReference>
<dbReference type="GeneID" id="1475598"/>
<dbReference type="KEGG" id="mac:MA_3705"/>
<dbReference type="HOGENOM" id="CLU_023208_2_2_2"/>
<dbReference type="InParanoid" id="Q8TJS2"/>
<dbReference type="OrthoDB" id="6818at2157"/>
<dbReference type="PhylomeDB" id="Q8TJS2"/>
<dbReference type="Proteomes" id="UP000002487">
    <property type="component" value="Chromosome"/>
</dbReference>
<dbReference type="GO" id="GO:0005737">
    <property type="term" value="C:cytoplasm"/>
    <property type="evidence" value="ECO:0000318"/>
    <property type="project" value="GO_Central"/>
</dbReference>
<dbReference type="GO" id="GO:0000408">
    <property type="term" value="C:EKC/KEOPS complex"/>
    <property type="evidence" value="ECO:0000318"/>
    <property type="project" value="GO_Central"/>
</dbReference>
<dbReference type="GO" id="GO:0005524">
    <property type="term" value="F:ATP binding"/>
    <property type="evidence" value="ECO:0007669"/>
    <property type="project" value="UniProtKB-UniRule"/>
</dbReference>
<dbReference type="GO" id="GO:0005506">
    <property type="term" value="F:iron ion binding"/>
    <property type="evidence" value="ECO:0007669"/>
    <property type="project" value="UniProtKB-UniRule"/>
</dbReference>
<dbReference type="GO" id="GO:0004222">
    <property type="term" value="F:metalloendopeptidase activity"/>
    <property type="evidence" value="ECO:0007669"/>
    <property type="project" value="InterPro"/>
</dbReference>
<dbReference type="GO" id="GO:0061711">
    <property type="term" value="F:N(6)-L-threonylcarbamoyladenine synthase activity"/>
    <property type="evidence" value="ECO:0007669"/>
    <property type="project" value="UniProtKB-EC"/>
</dbReference>
<dbReference type="GO" id="GO:0106310">
    <property type="term" value="F:protein serine kinase activity"/>
    <property type="evidence" value="ECO:0007669"/>
    <property type="project" value="RHEA"/>
</dbReference>
<dbReference type="GO" id="GO:0004674">
    <property type="term" value="F:protein serine/threonine kinase activity"/>
    <property type="evidence" value="ECO:0007669"/>
    <property type="project" value="UniProtKB-KW"/>
</dbReference>
<dbReference type="GO" id="GO:0004712">
    <property type="term" value="F:protein serine/threonine/tyrosine kinase activity"/>
    <property type="evidence" value="ECO:0007669"/>
    <property type="project" value="UniProtKB-UniRule"/>
</dbReference>
<dbReference type="GO" id="GO:0008270">
    <property type="term" value="F:zinc ion binding"/>
    <property type="evidence" value="ECO:0007669"/>
    <property type="project" value="InterPro"/>
</dbReference>
<dbReference type="GO" id="GO:0002949">
    <property type="term" value="P:tRNA threonylcarbamoyladenosine modification"/>
    <property type="evidence" value="ECO:0007669"/>
    <property type="project" value="UniProtKB-UniRule"/>
</dbReference>
<dbReference type="CDD" id="cd24131">
    <property type="entry name" value="ASKHA_NBD_Kae1_arch_bac"/>
    <property type="match status" value="1"/>
</dbReference>
<dbReference type="FunFam" id="3.30.420.40:FF:000284">
    <property type="entry name" value="Probable bifunctional tRNA threonylcarbamoyladenosine biosynthesis protein"/>
    <property type="match status" value="1"/>
</dbReference>
<dbReference type="Gene3D" id="3.30.420.40">
    <property type="match status" value="2"/>
</dbReference>
<dbReference type="Gene3D" id="3.30.200.20">
    <property type="entry name" value="Phosphorylase Kinase, domain 1"/>
    <property type="match status" value="1"/>
</dbReference>
<dbReference type="Gene3D" id="1.10.510.10">
    <property type="entry name" value="Transferase(Phosphotransferase) domain 1"/>
    <property type="match status" value="1"/>
</dbReference>
<dbReference type="HAMAP" id="MF_01446">
    <property type="entry name" value="Kae1"/>
    <property type="match status" value="1"/>
</dbReference>
<dbReference type="HAMAP" id="MF_01447">
    <property type="entry name" value="Kae1_Bud32_arch"/>
    <property type="match status" value="1"/>
</dbReference>
<dbReference type="InterPro" id="IPR043129">
    <property type="entry name" value="ATPase_NBD"/>
</dbReference>
<dbReference type="InterPro" id="IPR022495">
    <property type="entry name" value="Bud32"/>
</dbReference>
<dbReference type="InterPro" id="IPR000905">
    <property type="entry name" value="Gcp-like_dom"/>
</dbReference>
<dbReference type="InterPro" id="IPR017861">
    <property type="entry name" value="KAE1/TsaD"/>
</dbReference>
<dbReference type="InterPro" id="IPR034680">
    <property type="entry name" value="Kae1_archaea_euk"/>
</dbReference>
<dbReference type="InterPro" id="IPR011009">
    <property type="entry name" value="Kinase-like_dom_sf"/>
</dbReference>
<dbReference type="InterPro" id="IPR000719">
    <property type="entry name" value="Prot_kinase_dom"/>
</dbReference>
<dbReference type="InterPro" id="IPR018934">
    <property type="entry name" value="RIO_dom"/>
</dbReference>
<dbReference type="InterPro" id="IPR009220">
    <property type="entry name" value="tRNA_threonyl_synthase/kinase"/>
</dbReference>
<dbReference type="InterPro" id="IPR008266">
    <property type="entry name" value="Tyr_kinase_AS"/>
</dbReference>
<dbReference type="NCBIfam" id="TIGR03724">
    <property type="entry name" value="arch_bud32"/>
    <property type="match status" value="1"/>
</dbReference>
<dbReference type="NCBIfam" id="TIGR03722">
    <property type="entry name" value="arch_KAE1"/>
    <property type="match status" value="1"/>
</dbReference>
<dbReference type="NCBIfam" id="TIGR00329">
    <property type="entry name" value="gcp_kae1"/>
    <property type="match status" value="1"/>
</dbReference>
<dbReference type="NCBIfam" id="NF007174">
    <property type="entry name" value="PRK09605.1"/>
    <property type="match status" value="1"/>
</dbReference>
<dbReference type="NCBIfam" id="NF011462">
    <property type="entry name" value="PRK14879.1-3"/>
    <property type="match status" value="1"/>
</dbReference>
<dbReference type="PANTHER" id="PTHR11735">
    <property type="entry name" value="TRNA N6-ADENOSINE THREONYLCARBAMOYLTRANSFERASE"/>
    <property type="match status" value="1"/>
</dbReference>
<dbReference type="PANTHER" id="PTHR11735:SF14">
    <property type="entry name" value="TRNA N6-ADENOSINE THREONYLCARBAMOYLTRANSFERASE"/>
    <property type="match status" value="1"/>
</dbReference>
<dbReference type="Pfam" id="PF01163">
    <property type="entry name" value="RIO1"/>
    <property type="match status" value="1"/>
</dbReference>
<dbReference type="Pfam" id="PF00814">
    <property type="entry name" value="TsaD"/>
    <property type="match status" value="1"/>
</dbReference>
<dbReference type="PIRSF" id="PIRSF036401">
    <property type="entry name" value="Gcp_STYKS"/>
    <property type="match status" value="1"/>
</dbReference>
<dbReference type="PRINTS" id="PR00789">
    <property type="entry name" value="OSIALOPTASE"/>
</dbReference>
<dbReference type="SUPFAM" id="SSF53067">
    <property type="entry name" value="Actin-like ATPase domain"/>
    <property type="match status" value="1"/>
</dbReference>
<dbReference type="SUPFAM" id="SSF56112">
    <property type="entry name" value="Protein kinase-like (PK-like)"/>
    <property type="match status" value="1"/>
</dbReference>
<dbReference type="PROSITE" id="PS50011">
    <property type="entry name" value="PROTEIN_KINASE_DOM"/>
    <property type="match status" value="1"/>
</dbReference>
<dbReference type="PROSITE" id="PS00109">
    <property type="entry name" value="PROTEIN_KINASE_TYR"/>
    <property type="match status" value="1"/>
</dbReference>